<sequence length="142" mass="15343">MNRTMFKSKIHRATVTHADLHYVGSVTVDLDLLEAADILPGELVAIVDVTNGARLETYTIAGERGSGVIGINGAAAHLMHENDIVILITYAEMTTEEAKAYTPKVVHVDKDNKIVQIGNDPAEGHTRGLMRPPFALNNSALN</sequence>
<organism>
    <name type="scientific">Arthrobacter sp. (strain FB24)</name>
    <dbReference type="NCBI Taxonomy" id="290399"/>
    <lineage>
        <taxon>Bacteria</taxon>
        <taxon>Bacillati</taxon>
        <taxon>Actinomycetota</taxon>
        <taxon>Actinomycetes</taxon>
        <taxon>Micrococcales</taxon>
        <taxon>Micrococcaceae</taxon>
        <taxon>Arthrobacter</taxon>
    </lineage>
</organism>
<keyword id="KW-0068">Autocatalytic cleavage</keyword>
<keyword id="KW-0963">Cytoplasm</keyword>
<keyword id="KW-0210">Decarboxylase</keyword>
<keyword id="KW-0456">Lyase</keyword>
<keyword id="KW-0566">Pantothenate biosynthesis</keyword>
<keyword id="KW-0670">Pyruvate</keyword>
<keyword id="KW-1185">Reference proteome</keyword>
<keyword id="KW-0704">Schiff base</keyword>
<keyword id="KW-0865">Zymogen</keyword>
<evidence type="ECO:0000255" key="1">
    <source>
        <dbReference type="HAMAP-Rule" id="MF_00446"/>
    </source>
</evidence>
<proteinExistence type="inferred from homology"/>
<dbReference type="EC" id="4.1.1.11" evidence="1"/>
<dbReference type="EMBL" id="CP000454">
    <property type="protein sequence ID" value="ABK05262.1"/>
    <property type="molecule type" value="Genomic_DNA"/>
</dbReference>
<dbReference type="RefSeq" id="WP_011693710.1">
    <property type="nucleotide sequence ID" value="NC_008541.1"/>
</dbReference>
<dbReference type="SMR" id="A0K1U2"/>
<dbReference type="STRING" id="290399.Arth_3887"/>
<dbReference type="KEGG" id="art:Arth_3887"/>
<dbReference type="eggNOG" id="COG0853">
    <property type="taxonomic scope" value="Bacteria"/>
</dbReference>
<dbReference type="HOGENOM" id="CLU_115305_2_0_11"/>
<dbReference type="UniPathway" id="UPA00028">
    <property type="reaction ID" value="UER00002"/>
</dbReference>
<dbReference type="Proteomes" id="UP000000754">
    <property type="component" value="Chromosome"/>
</dbReference>
<dbReference type="GO" id="GO:0005829">
    <property type="term" value="C:cytosol"/>
    <property type="evidence" value="ECO:0007669"/>
    <property type="project" value="TreeGrafter"/>
</dbReference>
<dbReference type="GO" id="GO:0004068">
    <property type="term" value="F:aspartate 1-decarboxylase activity"/>
    <property type="evidence" value="ECO:0007669"/>
    <property type="project" value="UniProtKB-UniRule"/>
</dbReference>
<dbReference type="GO" id="GO:0006523">
    <property type="term" value="P:alanine biosynthetic process"/>
    <property type="evidence" value="ECO:0007669"/>
    <property type="project" value="InterPro"/>
</dbReference>
<dbReference type="GO" id="GO:0015940">
    <property type="term" value="P:pantothenate biosynthetic process"/>
    <property type="evidence" value="ECO:0007669"/>
    <property type="project" value="UniProtKB-UniRule"/>
</dbReference>
<dbReference type="CDD" id="cd06919">
    <property type="entry name" value="Asp_decarbox"/>
    <property type="match status" value="1"/>
</dbReference>
<dbReference type="Gene3D" id="2.40.40.20">
    <property type="match status" value="1"/>
</dbReference>
<dbReference type="HAMAP" id="MF_00446">
    <property type="entry name" value="PanD"/>
    <property type="match status" value="1"/>
</dbReference>
<dbReference type="InterPro" id="IPR009010">
    <property type="entry name" value="Asp_de-COase-like_dom_sf"/>
</dbReference>
<dbReference type="InterPro" id="IPR003190">
    <property type="entry name" value="Asp_decarbox"/>
</dbReference>
<dbReference type="NCBIfam" id="TIGR00223">
    <property type="entry name" value="panD"/>
    <property type="match status" value="1"/>
</dbReference>
<dbReference type="PANTHER" id="PTHR21012">
    <property type="entry name" value="ASPARTATE 1-DECARBOXYLASE"/>
    <property type="match status" value="1"/>
</dbReference>
<dbReference type="PANTHER" id="PTHR21012:SF0">
    <property type="entry name" value="ASPARTATE 1-DECARBOXYLASE"/>
    <property type="match status" value="1"/>
</dbReference>
<dbReference type="Pfam" id="PF02261">
    <property type="entry name" value="Asp_decarbox"/>
    <property type="match status" value="1"/>
</dbReference>
<dbReference type="PIRSF" id="PIRSF006246">
    <property type="entry name" value="Asp_decarbox"/>
    <property type="match status" value="1"/>
</dbReference>
<dbReference type="SUPFAM" id="SSF50692">
    <property type="entry name" value="ADC-like"/>
    <property type="match status" value="1"/>
</dbReference>
<feature type="chain" id="PRO_0000306929" description="Aspartate 1-decarboxylase beta chain" evidence="1">
    <location>
        <begin position="1"/>
        <end position="24"/>
    </location>
</feature>
<feature type="chain" id="PRO_0000306930" description="Aspartate 1-decarboxylase alpha chain" evidence="1">
    <location>
        <begin position="25"/>
        <end position="142"/>
    </location>
</feature>
<feature type="active site" description="Schiff-base intermediate with substrate; via pyruvic acid" evidence="1">
    <location>
        <position position="25"/>
    </location>
</feature>
<feature type="active site" description="Proton donor" evidence="1">
    <location>
        <position position="58"/>
    </location>
</feature>
<feature type="binding site" evidence="1">
    <location>
        <position position="57"/>
    </location>
    <ligand>
        <name>substrate</name>
    </ligand>
</feature>
<feature type="binding site" evidence="1">
    <location>
        <begin position="73"/>
        <end position="75"/>
    </location>
    <ligand>
        <name>substrate</name>
    </ligand>
</feature>
<feature type="modified residue" description="Pyruvic acid (Ser)" evidence="1">
    <location>
        <position position="25"/>
    </location>
</feature>
<reference key="1">
    <citation type="journal article" date="2013" name="Stand. Genomic Sci.">
        <title>Complete genome sequence of Arthrobacter sp. strain FB24.</title>
        <authorList>
            <person name="Nakatsu C.H."/>
            <person name="Barabote R."/>
            <person name="Thompson S."/>
            <person name="Bruce D."/>
            <person name="Detter C."/>
            <person name="Brettin T."/>
            <person name="Han C."/>
            <person name="Beasley F."/>
            <person name="Chen W."/>
            <person name="Konopka A."/>
            <person name="Xie G."/>
        </authorList>
    </citation>
    <scope>NUCLEOTIDE SEQUENCE [LARGE SCALE GENOMIC DNA]</scope>
    <source>
        <strain>FB24</strain>
    </source>
</reference>
<name>PAND_ARTS2</name>
<gene>
    <name evidence="1" type="primary">panD</name>
    <name type="ordered locus">Arth_3887</name>
</gene>
<comment type="function">
    <text evidence="1">Catalyzes the pyruvoyl-dependent decarboxylation of aspartate to produce beta-alanine.</text>
</comment>
<comment type="catalytic activity">
    <reaction evidence="1">
        <text>L-aspartate + H(+) = beta-alanine + CO2</text>
        <dbReference type="Rhea" id="RHEA:19497"/>
        <dbReference type="ChEBI" id="CHEBI:15378"/>
        <dbReference type="ChEBI" id="CHEBI:16526"/>
        <dbReference type="ChEBI" id="CHEBI:29991"/>
        <dbReference type="ChEBI" id="CHEBI:57966"/>
        <dbReference type="EC" id="4.1.1.11"/>
    </reaction>
</comment>
<comment type="cofactor">
    <cofactor evidence="1">
        <name>pyruvate</name>
        <dbReference type="ChEBI" id="CHEBI:15361"/>
    </cofactor>
    <text evidence="1">Binds 1 pyruvoyl group covalently per subunit.</text>
</comment>
<comment type="pathway">
    <text evidence="1">Cofactor biosynthesis; (R)-pantothenate biosynthesis; beta-alanine from L-aspartate: step 1/1.</text>
</comment>
<comment type="subunit">
    <text evidence="1">Heterooctamer of four alpha and four beta subunits.</text>
</comment>
<comment type="subcellular location">
    <subcellularLocation>
        <location evidence="1">Cytoplasm</location>
    </subcellularLocation>
</comment>
<comment type="PTM">
    <text evidence="1">Is synthesized initially as an inactive proenzyme, which is activated by self-cleavage at a specific serine bond to produce a beta-subunit with a hydroxyl group at its C-terminus and an alpha-subunit with a pyruvoyl group at its N-terminus.</text>
</comment>
<comment type="similarity">
    <text evidence="1">Belongs to the PanD family.</text>
</comment>
<protein>
    <recommendedName>
        <fullName evidence="1">Aspartate 1-decarboxylase</fullName>
        <ecNumber evidence="1">4.1.1.11</ecNumber>
    </recommendedName>
    <alternativeName>
        <fullName evidence="1">Aspartate alpha-decarboxylase</fullName>
    </alternativeName>
    <component>
        <recommendedName>
            <fullName evidence="1">Aspartate 1-decarboxylase beta chain</fullName>
        </recommendedName>
    </component>
    <component>
        <recommendedName>
            <fullName evidence="1">Aspartate 1-decarboxylase alpha chain</fullName>
        </recommendedName>
    </component>
</protein>
<accession>A0K1U2</accession>